<accession>O18821</accession>
<proteinExistence type="evidence at transcript level"/>
<reference key="1">
    <citation type="submission" date="2000-06" db="EMBL/GenBank/DDBJ databases">
        <title>Cloning and sequencing of the equine pituitary gonadotropin-releasing hormone receptor and expression of its mRNA following administration of pulsatile or continuous GnRH.</title>
        <authorList>
            <person name="Porter M.B."/>
            <person name="Green M.L."/>
            <person name="Simmen R.C.M."/>
            <person name="Sharp D.C."/>
        </authorList>
    </citation>
    <scope>NUCLEOTIDE SEQUENCE [MRNA]</scope>
</reference>
<gene>
    <name type="primary">GNRHR</name>
</gene>
<dbReference type="EMBL" id="AF018072">
    <property type="protein sequence ID" value="AAC27099.2"/>
    <property type="molecule type" value="mRNA"/>
</dbReference>
<dbReference type="RefSeq" id="NP_001075305.1">
    <property type="nucleotide sequence ID" value="NM_001081836.2"/>
</dbReference>
<dbReference type="SMR" id="O18821"/>
<dbReference type="FunCoup" id="O18821">
    <property type="interactions" value="236"/>
</dbReference>
<dbReference type="STRING" id="9796.ENSECAP00000004001"/>
<dbReference type="GlyCosmos" id="O18821">
    <property type="glycosylation" value="1 site, No reported glycans"/>
</dbReference>
<dbReference type="PaxDb" id="9796-ENSECAP00000004001"/>
<dbReference type="Ensembl" id="ENSECAT00000005669.3">
    <property type="protein sequence ID" value="ENSECAP00000004001.2"/>
    <property type="gene ID" value="ENSECAG00000005763.3"/>
</dbReference>
<dbReference type="GeneID" id="100033874"/>
<dbReference type="KEGG" id="ecb:100033874"/>
<dbReference type="CTD" id="2798"/>
<dbReference type="VGNC" id="VGNC:58457">
    <property type="gene designation" value="GNRHR"/>
</dbReference>
<dbReference type="GeneTree" id="ENSGT01130000278263"/>
<dbReference type="InParanoid" id="O18821"/>
<dbReference type="OMA" id="LHQDPHE"/>
<dbReference type="OrthoDB" id="6022667at2759"/>
<dbReference type="Proteomes" id="UP000002281">
    <property type="component" value="Chromosome 3"/>
</dbReference>
<dbReference type="Bgee" id="ENSECAG00000005763">
    <property type="expression patterns" value="Expressed in blood and 4 other cell types or tissues"/>
</dbReference>
<dbReference type="GO" id="GO:0005886">
    <property type="term" value="C:plasma membrane"/>
    <property type="evidence" value="ECO:0000318"/>
    <property type="project" value="GO_Central"/>
</dbReference>
<dbReference type="GO" id="GO:0004968">
    <property type="term" value="F:gonadotropin-releasing hormone receptor activity"/>
    <property type="evidence" value="ECO:0000318"/>
    <property type="project" value="GO_Central"/>
</dbReference>
<dbReference type="GO" id="GO:0032870">
    <property type="term" value="P:cellular response to hormone stimulus"/>
    <property type="evidence" value="ECO:0000318"/>
    <property type="project" value="GO_Central"/>
</dbReference>
<dbReference type="GO" id="GO:0007186">
    <property type="term" value="P:G protein-coupled receptor signaling pathway"/>
    <property type="evidence" value="ECO:0000318"/>
    <property type="project" value="GO_Central"/>
</dbReference>
<dbReference type="FunFam" id="1.20.1070.10:FF:000203">
    <property type="entry name" value="gonadotropin-releasing hormone receptor"/>
    <property type="match status" value="1"/>
</dbReference>
<dbReference type="Gene3D" id="1.20.1070.10">
    <property type="entry name" value="Rhodopsin 7-helix transmembrane proteins"/>
    <property type="match status" value="1"/>
</dbReference>
<dbReference type="InterPro" id="IPR000276">
    <property type="entry name" value="GPCR_Rhodpsn"/>
</dbReference>
<dbReference type="InterPro" id="IPR017452">
    <property type="entry name" value="GPCR_Rhodpsn_7TM"/>
</dbReference>
<dbReference type="InterPro" id="IPR001658">
    <property type="entry name" value="GphnRH_fam_rcpt"/>
</dbReference>
<dbReference type="PANTHER" id="PTHR24241:SF22">
    <property type="entry name" value="GONADOTROPIN-RELEASING HORMONE RECEPTOR"/>
    <property type="match status" value="1"/>
</dbReference>
<dbReference type="PANTHER" id="PTHR24241">
    <property type="entry name" value="NEUROPEPTIDE RECEPTOR-RELATED G-PROTEIN COUPLED RECEPTOR"/>
    <property type="match status" value="1"/>
</dbReference>
<dbReference type="Pfam" id="PF00001">
    <property type="entry name" value="7tm_1"/>
    <property type="match status" value="1"/>
</dbReference>
<dbReference type="PRINTS" id="PR00529">
    <property type="entry name" value="GNADOTRPHINR"/>
</dbReference>
<dbReference type="PRINTS" id="PR00237">
    <property type="entry name" value="GPCRRHODOPSN"/>
</dbReference>
<dbReference type="SUPFAM" id="SSF81321">
    <property type="entry name" value="Family A G protein-coupled receptor-like"/>
    <property type="match status" value="1"/>
</dbReference>
<dbReference type="PROSITE" id="PS00237">
    <property type="entry name" value="G_PROTEIN_RECEP_F1_1"/>
    <property type="match status" value="1"/>
</dbReference>
<dbReference type="PROSITE" id="PS50262">
    <property type="entry name" value="G_PROTEIN_RECEP_F1_2"/>
    <property type="match status" value="1"/>
</dbReference>
<feature type="chain" id="PRO_0000069486" description="Gonadotropin-releasing hormone receptor">
    <location>
        <begin position="1"/>
        <end position="328"/>
    </location>
</feature>
<feature type="topological domain" description="Extracellular" evidence="2">
    <location>
        <begin position="1"/>
        <end position="38"/>
    </location>
</feature>
<feature type="transmembrane region" description="Helical; Name=1" evidence="2">
    <location>
        <begin position="39"/>
        <end position="59"/>
    </location>
</feature>
<feature type="topological domain" description="Cytoplasmic" evidence="2">
    <location>
        <begin position="60"/>
        <end position="84"/>
    </location>
</feature>
<feature type="transmembrane region" description="Helical; Name=2" evidence="2">
    <location>
        <begin position="85"/>
        <end position="105"/>
    </location>
</feature>
<feature type="topological domain" description="Extracellular" evidence="2">
    <location>
        <begin position="106"/>
        <end position="115"/>
    </location>
</feature>
<feature type="transmembrane region" description="Helical; Name=3" evidence="2">
    <location>
        <begin position="116"/>
        <end position="136"/>
    </location>
</feature>
<feature type="topological domain" description="Cytoplasmic" evidence="2">
    <location>
        <begin position="137"/>
        <end position="157"/>
    </location>
</feature>
<feature type="transmembrane region" description="Helical; Name=4" evidence="2">
    <location>
        <begin position="158"/>
        <end position="178"/>
    </location>
</feature>
<feature type="topological domain" description="Extracellular" evidence="2">
    <location>
        <begin position="179"/>
        <end position="208"/>
    </location>
</feature>
<feature type="transmembrane region" description="Helical; Name=5" evidence="2">
    <location>
        <begin position="209"/>
        <end position="229"/>
    </location>
</feature>
<feature type="topological domain" description="Cytoplasmic" evidence="2">
    <location>
        <begin position="230"/>
        <end position="271"/>
    </location>
</feature>
<feature type="transmembrane region" description="Helical; Name=6" evidence="2">
    <location>
        <begin position="272"/>
        <end position="292"/>
    </location>
</feature>
<feature type="topological domain" description="Extracellular" evidence="2">
    <location>
        <begin position="293"/>
        <end position="306"/>
    </location>
</feature>
<feature type="transmembrane region" description="Helical; Name=7" evidence="2">
    <location>
        <begin position="307"/>
        <end position="327"/>
    </location>
</feature>
<feature type="topological domain" description="Cytoplasmic" evidence="2">
    <location>
        <position position="328"/>
    </location>
</feature>
<feature type="glycosylation site" description="N-linked (GlcNAc...) asparagine" evidence="2">
    <location>
        <position position="18"/>
    </location>
</feature>
<feature type="disulfide bond" evidence="3">
    <location>
        <begin position="114"/>
        <end position="196"/>
    </location>
</feature>
<comment type="function">
    <text evidence="1">Receptor for gonadotropin releasing hormone (GnRH) that mediates the action of GnRH to stimulate the secretion of the gonadotropic hormones luteinizing hormone (LH) and follicle-stimulating hormone (FSH). This receptor mediates its action by association with G-proteins that activate a phosphatidylinositol-calcium second messenger system (By similarity).</text>
</comment>
<comment type="subcellular location">
    <subcellularLocation>
        <location>Cell membrane</location>
        <topology>Multi-pass membrane protein</topology>
    </subcellularLocation>
</comment>
<comment type="similarity">
    <text evidence="3">Belongs to the G-protein coupled receptor 1 family.</text>
</comment>
<sequence>MANSASPEQNQNHCSASNSSIPLTQANLPTLTLSGKIRVTVTFFLFLLSTTFNASFLLKLHKWTQKKENGKKLSKMKVLLKHLTLANLLETLIVMPLDGMWNITVQWYAGELLCKVLSYLKLFSMYAPAFMMVVISLDRSLAITRPLAVKSNSKLGRSMIGLAWLLSSIFAGPQLYIFRMIHLADSSGQTEGFSQCVTHCSFPQWWHQAFYNFFTFSCLFIIPLLFMLICNAKIIFTLTRVLHQDPHKLQLNQSKNNIPRARLRTLKMTVAFATSFTVCWTPYYVLGIWYWFDPEMLNRVSDPVNHFFFLFALLNPCFDPLIYGYFSL</sequence>
<keyword id="KW-1003">Cell membrane</keyword>
<keyword id="KW-1015">Disulfide bond</keyword>
<keyword id="KW-0297">G-protein coupled receptor</keyword>
<keyword id="KW-0325">Glycoprotein</keyword>
<keyword id="KW-0472">Membrane</keyword>
<keyword id="KW-0675">Receptor</keyword>
<keyword id="KW-1185">Reference proteome</keyword>
<keyword id="KW-0807">Transducer</keyword>
<keyword id="KW-0812">Transmembrane</keyword>
<keyword id="KW-1133">Transmembrane helix</keyword>
<evidence type="ECO:0000250" key="1"/>
<evidence type="ECO:0000255" key="2"/>
<evidence type="ECO:0000255" key="3">
    <source>
        <dbReference type="PROSITE-ProRule" id="PRU00521"/>
    </source>
</evidence>
<organism>
    <name type="scientific">Equus caballus</name>
    <name type="common">Horse</name>
    <dbReference type="NCBI Taxonomy" id="9796"/>
    <lineage>
        <taxon>Eukaryota</taxon>
        <taxon>Metazoa</taxon>
        <taxon>Chordata</taxon>
        <taxon>Craniata</taxon>
        <taxon>Vertebrata</taxon>
        <taxon>Euteleostomi</taxon>
        <taxon>Mammalia</taxon>
        <taxon>Eutheria</taxon>
        <taxon>Laurasiatheria</taxon>
        <taxon>Perissodactyla</taxon>
        <taxon>Equidae</taxon>
        <taxon>Equus</taxon>
    </lineage>
</organism>
<protein>
    <recommendedName>
        <fullName>Gonadotropin-releasing hormone receptor</fullName>
        <shortName>GnRH receptor</shortName>
        <shortName>GnRH-R</shortName>
    </recommendedName>
</protein>
<name>GNRHR_HORSE</name>